<evidence type="ECO:0000250" key="1">
    <source>
        <dbReference type="UniProtKB" id="P21237"/>
    </source>
</evidence>
<evidence type="ECO:0000250" key="2">
    <source>
        <dbReference type="UniProtKB" id="P23560"/>
    </source>
</evidence>
<evidence type="ECO:0000255" key="3"/>
<evidence type="ECO:0000305" key="4"/>
<keyword id="KW-0165">Cleavage on pair of basic residues</keyword>
<keyword id="KW-1015">Disulfide bond</keyword>
<keyword id="KW-0339">Growth factor</keyword>
<keyword id="KW-1185">Reference proteome</keyword>
<keyword id="KW-0964">Secreted</keyword>
<keyword id="KW-0732">Signal</keyword>
<proteinExistence type="evidence at transcript level"/>
<name>BDNF_BOVIN</name>
<reference key="1">
    <citation type="submission" date="2005-11" db="EMBL/GenBank/DDBJ databases">
        <authorList>
            <consortium name="NIH - Mammalian Gene Collection (MGC) project"/>
        </authorList>
    </citation>
    <scope>NUCLEOTIDE SEQUENCE [LARGE SCALE MRNA]</scope>
    <source>
        <strain>Crossbred X Angus</strain>
        <tissue>Liver</tissue>
    </source>
</reference>
<reference key="2">
    <citation type="journal article" date="1997" name="Gene">
        <title>The gene encoding bovine brain-derived neurotrophic factor (BDNF).</title>
        <authorList>
            <person name="Arab S.F."/>
            <person name="Krohn K."/>
            <person name="Lachmund A."/>
            <person name="Unsicker K."/>
            <person name="Suter-Crazzolara C."/>
        </authorList>
    </citation>
    <scope>NUCLEOTIDE SEQUENCE [GENOMIC DNA] OF 3-250</scope>
</reference>
<dbReference type="EMBL" id="BC109860">
    <property type="protein sequence ID" value="AAI09861.1"/>
    <property type="molecule type" value="mRNA"/>
</dbReference>
<dbReference type="EMBL" id="X97914">
    <property type="protein sequence ID" value="CAA66488.1"/>
    <property type="molecule type" value="Genomic_DNA"/>
</dbReference>
<dbReference type="PIR" id="JC6183">
    <property type="entry name" value="JC6183"/>
</dbReference>
<dbReference type="RefSeq" id="NP_001040072.1">
    <property type="nucleotide sequence ID" value="NM_001046607.2"/>
</dbReference>
<dbReference type="RefSeq" id="XP_005216392.1">
    <property type="nucleotide sequence ID" value="XM_005216335.5"/>
</dbReference>
<dbReference type="RefSeq" id="XP_005216393.1">
    <property type="nucleotide sequence ID" value="XM_005216336.3"/>
</dbReference>
<dbReference type="RefSeq" id="XP_059730970.1">
    <property type="nucleotide sequence ID" value="XM_059874987.1"/>
</dbReference>
<dbReference type="SMR" id="Q95106"/>
<dbReference type="FunCoup" id="Q95106">
    <property type="interactions" value="700"/>
</dbReference>
<dbReference type="STRING" id="9913.ENSBTAP00000010694"/>
<dbReference type="PaxDb" id="9913-ENSBTAP00000010694"/>
<dbReference type="Ensembl" id="ENSBTAT00000010694.7">
    <property type="protein sequence ID" value="ENSBTAP00000010694.5"/>
    <property type="gene ID" value="ENSBTAG00000008134.7"/>
</dbReference>
<dbReference type="Ensembl" id="ENSBTAT00000122659.1">
    <property type="protein sequence ID" value="ENSBTAP00000077269.1"/>
    <property type="gene ID" value="ENSBTAG00000008134.7"/>
</dbReference>
<dbReference type="Ensembl" id="ENSBTAT00000124916.1">
    <property type="protein sequence ID" value="ENSBTAP00000078080.1"/>
    <property type="gene ID" value="ENSBTAG00000008134.7"/>
</dbReference>
<dbReference type="GeneID" id="617701"/>
<dbReference type="KEGG" id="bta:617701"/>
<dbReference type="CTD" id="627"/>
<dbReference type="VEuPathDB" id="HostDB:ENSBTAG00000008134"/>
<dbReference type="VGNC" id="VGNC:26461">
    <property type="gene designation" value="BDNF"/>
</dbReference>
<dbReference type="eggNOG" id="ENOG502QRU8">
    <property type="taxonomic scope" value="Eukaryota"/>
</dbReference>
<dbReference type="GeneTree" id="ENSGT00390000007725"/>
<dbReference type="HOGENOM" id="CLU_059942_0_0_1"/>
<dbReference type="InParanoid" id="Q95106"/>
<dbReference type="OMA" id="YPGMRTH"/>
<dbReference type="OrthoDB" id="8959386at2759"/>
<dbReference type="TreeFam" id="TF106463"/>
<dbReference type="Reactome" id="R-BTA-1257604">
    <property type="pathway name" value="PIP3 activates AKT signaling"/>
</dbReference>
<dbReference type="Reactome" id="R-BTA-6811558">
    <property type="pathway name" value="PI5P, PP2A and IER3 Regulate PI3K/AKT Signaling"/>
</dbReference>
<dbReference type="Reactome" id="R-BTA-9026527">
    <property type="pathway name" value="Activated NTRK2 signals through PLCG1"/>
</dbReference>
<dbReference type="Reactome" id="R-BTA-9028731">
    <property type="pathway name" value="Activated NTRK2 signals through FRS2 and FRS3"/>
</dbReference>
<dbReference type="Reactome" id="R-BTA-9032759">
    <property type="pathway name" value="NTRK2 activates RAC1"/>
</dbReference>
<dbReference type="Proteomes" id="UP000009136">
    <property type="component" value="Chromosome 15"/>
</dbReference>
<dbReference type="Bgee" id="ENSBTAG00000008134">
    <property type="expression patterns" value="Expressed in oocyte and 68 other cell types or tissues"/>
</dbReference>
<dbReference type="GO" id="GO:0030424">
    <property type="term" value="C:axon"/>
    <property type="evidence" value="ECO:0000318"/>
    <property type="project" value="GO_Central"/>
</dbReference>
<dbReference type="GO" id="GO:0005737">
    <property type="term" value="C:cytoplasm"/>
    <property type="evidence" value="ECO:0000250"/>
    <property type="project" value="UniProtKB"/>
</dbReference>
<dbReference type="GO" id="GO:0030425">
    <property type="term" value="C:dendrite"/>
    <property type="evidence" value="ECO:0000318"/>
    <property type="project" value="GO_Central"/>
</dbReference>
<dbReference type="GO" id="GO:0005615">
    <property type="term" value="C:extracellular space"/>
    <property type="evidence" value="ECO:0000318"/>
    <property type="project" value="GO_Central"/>
</dbReference>
<dbReference type="GO" id="GO:0048471">
    <property type="term" value="C:perinuclear region of cytoplasm"/>
    <property type="evidence" value="ECO:0000250"/>
    <property type="project" value="UniProtKB"/>
</dbReference>
<dbReference type="GO" id="GO:0008021">
    <property type="term" value="C:synaptic vesicle"/>
    <property type="evidence" value="ECO:0000318"/>
    <property type="project" value="GO_Central"/>
</dbReference>
<dbReference type="GO" id="GO:0008083">
    <property type="term" value="F:growth factor activity"/>
    <property type="evidence" value="ECO:0000318"/>
    <property type="project" value="GO_Central"/>
</dbReference>
<dbReference type="GO" id="GO:0005163">
    <property type="term" value="F:nerve growth factor receptor binding"/>
    <property type="evidence" value="ECO:0000318"/>
    <property type="project" value="GO_Central"/>
</dbReference>
<dbReference type="GO" id="GO:0007169">
    <property type="term" value="P:cell surface receptor protein tyrosine kinase signaling pathway"/>
    <property type="evidence" value="ECO:0000318"/>
    <property type="project" value="GO_Central"/>
</dbReference>
<dbReference type="GO" id="GO:0050804">
    <property type="term" value="P:modulation of chemical synaptic transmission"/>
    <property type="evidence" value="ECO:0000318"/>
    <property type="project" value="GO_Central"/>
</dbReference>
<dbReference type="GO" id="GO:0043524">
    <property type="term" value="P:negative regulation of neuron apoptotic process"/>
    <property type="evidence" value="ECO:0000318"/>
    <property type="project" value="GO_Central"/>
</dbReference>
<dbReference type="GO" id="GO:0021675">
    <property type="term" value="P:nerve development"/>
    <property type="evidence" value="ECO:0000318"/>
    <property type="project" value="GO_Central"/>
</dbReference>
<dbReference type="GO" id="GO:0038180">
    <property type="term" value="P:nerve growth factor signaling pathway"/>
    <property type="evidence" value="ECO:0000318"/>
    <property type="project" value="GO_Central"/>
</dbReference>
<dbReference type="GO" id="GO:0048812">
    <property type="term" value="P:neuron projection morphogenesis"/>
    <property type="evidence" value="ECO:0000318"/>
    <property type="project" value="GO_Central"/>
</dbReference>
<dbReference type="FunFam" id="2.10.90.10:FF:000002">
    <property type="entry name" value="Brain-derived neurotrophic factor"/>
    <property type="match status" value="1"/>
</dbReference>
<dbReference type="Gene3D" id="2.10.90.10">
    <property type="entry name" value="Cystine-knot cytokines"/>
    <property type="match status" value="1"/>
</dbReference>
<dbReference type="InterPro" id="IPR020430">
    <property type="entry name" value="Brain-der_neurotrophic_factor"/>
</dbReference>
<dbReference type="InterPro" id="IPR029034">
    <property type="entry name" value="Cystine-knot_cytokine"/>
</dbReference>
<dbReference type="InterPro" id="IPR020408">
    <property type="entry name" value="Nerve_growth_factor-like"/>
</dbReference>
<dbReference type="InterPro" id="IPR002072">
    <property type="entry name" value="Nerve_growth_factor-rel"/>
</dbReference>
<dbReference type="InterPro" id="IPR019846">
    <property type="entry name" value="Nerve_growth_factor_CS"/>
</dbReference>
<dbReference type="PANTHER" id="PTHR11589:SF3">
    <property type="entry name" value="BRAIN-DERIVED NEUROTROPHIC FACTOR"/>
    <property type="match status" value="1"/>
</dbReference>
<dbReference type="PANTHER" id="PTHR11589">
    <property type="entry name" value="NERVE GROWTH FACTOR NGF -RELATED"/>
    <property type="match status" value="1"/>
</dbReference>
<dbReference type="Pfam" id="PF00243">
    <property type="entry name" value="NGF"/>
    <property type="match status" value="1"/>
</dbReference>
<dbReference type="PIRSF" id="PIRSF001789">
    <property type="entry name" value="NGF"/>
    <property type="match status" value="1"/>
</dbReference>
<dbReference type="PRINTS" id="PR01912">
    <property type="entry name" value="BDNFACTOR"/>
</dbReference>
<dbReference type="PRINTS" id="PR00268">
    <property type="entry name" value="NGF"/>
</dbReference>
<dbReference type="SMART" id="SM00140">
    <property type="entry name" value="NGF"/>
    <property type="match status" value="1"/>
</dbReference>
<dbReference type="SUPFAM" id="SSF57501">
    <property type="entry name" value="Cystine-knot cytokines"/>
    <property type="match status" value="1"/>
</dbReference>
<dbReference type="PROSITE" id="PS00248">
    <property type="entry name" value="NGF_1"/>
    <property type="match status" value="1"/>
</dbReference>
<dbReference type="PROSITE" id="PS50270">
    <property type="entry name" value="NGF_2"/>
    <property type="match status" value="1"/>
</dbReference>
<accession>Q95106</accession>
<accession>Q32KY2</accession>
<organism>
    <name type="scientific">Bos taurus</name>
    <name type="common">Bovine</name>
    <dbReference type="NCBI Taxonomy" id="9913"/>
    <lineage>
        <taxon>Eukaryota</taxon>
        <taxon>Metazoa</taxon>
        <taxon>Chordata</taxon>
        <taxon>Craniata</taxon>
        <taxon>Vertebrata</taxon>
        <taxon>Euteleostomi</taxon>
        <taxon>Mammalia</taxon>
        <taxon>Eutheria</taxon>
        <taxon>Laurasiatheria</taxon>
        <taxon>Artiodactyla</taxon>
        <taxon>Ruminantia</taxon>
        <taxon>Pecora</taxon>
        <taxon>Bovidae</taxon>
        <taxon>Bovinae</taxon>
        <taxon>Bos</taxon>
    </lineage>
</organism>
<gene>
    <name type="primary">BDNF</name>
</gene>
<protein>
    <recommendedName>
        <fullName evidence="4">Neurotrophic factor BDNF precursor form</fullName>
        <shortName>proBDNF</shortName>
    </recommendedName>
    <alternativeName>
        <fullName>Brain-derived neurotrophic factor</fullName>
    </alternativeName>
    <component>
        <recommendedName>
            <fullName>Neurotrophic factor BDNF</fullName>
        </recommendedName>
    </component>
</protein>
<comment type="function">
    <text evidence="1 2">Important signaling molecule that activates signaling cascades downstream of NTRK2 (By similarity). During development, promotes the survival and differentiation of selected neuronal populations of the peripheral and central nervous systems. Participates in axonal growth, pathfinding and in the modulation of dendritic growth and morphology. Major regulator of synaptic transmission and plasticity at adult synapses in many regions of the CNS. The versatility of BDNF is emphasized by its contribution to a range of adaptive neuronal responses including long-term potentiation (LTP), long-term depression (LTD), certain forms of short-term synaptic plasticity, as well as homeostatic regulation of intrinsic neuronal excitability (By similarity).</text>
</comment>
<comment type="function">
    <molecule>Neurotrophic factor BDNF precursor form</molecule>
    <text evidence="1">Important signaling molecule that activates signaling cascades downstream of NTRK2. Activates signaling cascades via the heterodimeric receptor formed by NGFR and SORCS2. Signaling via NGFR and SORCS2 plays a role in synaptic plasticity and long-term depression (LTD). Binding to NGFR and SORCS2 promotes neuronal apoptosis. Promotes neuronal growth cone collapse.</text>
</comment>
<comment type="subunit">
    <text evidence="1 2">Monomers and homodimers (By similarity). Binds to NTRK2/TRKB. Can form heterodimers with other neurotrophin family members, such as NTF3 and NTF4 (in vitro), but the physiological relevance of this is not clear (By similarity). BDNF precursor form: interacts with the heterodimer formed by NGFR and SORCS2. Mature BDNF has much lower affinity for the heterodimer formed by NGFR and SORCS2 (By similarity).</text>
</comment>
<comment type="subcellular location">
    <subcellularLocation>
        <location evidence="2">Secreted</location>
    </subcellularLocation>
</comment>
<comment type="subcellular location">
    <molecule>Neurotrophic factor BDNF precursor form</molecule>
    <subcellularLocation>
        <location evidence="2">Secreted</location>
    </subcellularLocation>
    <text evidence="2">A proportion of BDNF is secreted as immature precursor (proBDNF).</text>
</comment>
<comment type="PTM">
    <molecule>Neurotrophic factor BDNF precursor form</molecule>
    <text evidence="2">N-glycosylated and glycosulfated, contrary to mature BDNF.</text>
</comment>
<comment type="PTM">
    <text evidence="2">Mature BDNF is produced by proteolytic removal of the propeptide, catalyzed by a FURIN family member. In addition, the precursor form is proteolytically cleaved within the propeptide, but this is not an obligatory intermediate for the production of mature BDNF. Can be converted into mature BDNF by plasmin (PLG).</text>
</comment>
<comment type="similarity">
    <text evidence="4">Belongs to the NGF-beta family.</text>
</comment>
<feature type="signal peptide" evidence="3">
    <location>
        <begin position="1"/>
        <end position="18"/>
    </location>
</feature>
<feature type="chain" id="PRO_0000447528" description="Neurotrophic factor BDNF precursor form">
    <location>
        <begin position="19"/>
        <end position="250"/>
    </location>
</feature>
<feature type="propeptide" id="PRO_0000019625" evidence="1">
    <location>
        <begin position="19"/>
        <end position="131"/>
    </location>
</feature>
<feature type="chain" id="PRO_0000019626" description="Neurotrophic factor BDNF">
    <location>
        <begin position="132"/>
        <end position="250"/>
    </location>
</feature>
<feature type="site" description="Cleavage; by MBTPS1" evidence="2">
    <location>
        <begin position="57"/>
        <end position="58"/>
    </location>
</feature>
<feature type="disulfide bond" evidence="2">
    <location>
        <begin position="144"/>
        <end position="211"/>
    </location>
</feature>
<feature type="disulfide bond" evidence="2">
    <location>
        <begin position="189"/>
        <end position="240"/>
    </location>
</feature>
<feature type="disulfide bond" evidence="2">
    <location>
        <begin position="199"/>
        <end position="242"/>
    </location>
</feature>
<feature type="sequence conflict" description="In Ref. 2; CAA66488." evidence="4" ref="2">
    <original>A</original>
    <variation>T</variation>
    <location>
        <position position="33"/>
    </location>
</feature>
<feature type="sequence conflict" description="In Ref. 2; CAA66488." evidence="4" ref="2">
    <original>KT</original>
    <variation>RL</variation>
    <location>
        <begin position="157"/>
        <end position="158"/>
    </location>
</feature>
<sequence>MTILFLTMVISYFGCMKAAPMKEANLRAQGSLAYPGVRTHGTLESMNGPKVGSRGLTSSSSLADTFEHVIEELLDEDQKVRPSEENNKDADMYTSRVMLSSQVPLEPPLLFLLEEYKNYLDAANMSMRVRRHSDPARRGELSVCDSISEWVTAADKKTAVDMSGGTVTVLEKVPVSKGQLKQYFYETKCNPMGYTKEGCRGIDKRHWNSQCRTTQSYVRALTMDSKKRIGWRFIRIDTSCVCTLTIKRGR</sequence>